<sequence length="256" mass="27863">MRILLTNDDGIHAEGLSVLERIARTITDDVWVVAPEVDQSGLAHSLTLSEPLRLRPVSERRFALRGTPTDCVIMAVKKILDRKPDLVLSGVNIGANLADDVTYSGTVAGAIEGTLQGIRSMALSQAYHYAVGREVPWDVAETHAPALIRTLMDVDLPDGTLVNLNFPNCAVDSVAGVEVTSQGKLDFGLSIDERTDGRGFPYFWLRFGERAGDFRSGTDIRALRDNKISVTPLKLDMTDHAVQDLIARALRKGTVA</sequence>
<keyword id="KW-0963">Cytoplasm</keyword>
<keyword id="KW-0378">Hydrolase</keyword>
<keyword id="KW-0479">Metal-binding</keyword>
<keyword id="KW-0547">Nucleotide-binding</keyword>
<evidence type="ECO:0000255" key="1">
    <source>
        <dbReference type="HAMAP-Rule" id="MF_00060"/>
    </source>
</evidence>
<comment type="function">
    <text evidence="1">Nucleotidase that shows phosphatase activity on nucleoside 5'-monophosphates.</text>
</comment>
<comment type="catalytic activity">
    <reaction evidence="1">
        <text>a ribonucleoside 5'-phosphate + H2O = a ribonucleoside + phosphate</text>
        <dbReference type="Rhea" id="RHEA:12484"/>
        <dbReference type="ChEBI" id="CHEBI:15377"/>
        <dbReference type="ChEBI" id="CHEBI:18254"/>
        <dbReference type="ChEBI" id="CHEBI:43474"/>
        <dbReference type="ChEBI" id="CHEBI:58043"/>
        <dbReference type="EC" id="3.1.3.5"/>
    </reaction>
</comment>
<comment type="cofactor">
    <cofactor evidence="1">
        <name>a divalent metal cation</name>
        <dbReference type="ChEBI" id="CHEBI:60240"/>
    </cofactor>
    <text evidence="1">Binds 1 divalent metal cation per subunit.</text>
</comment>
<comment type="subcellular location">
    <subcellularLocation>
        <location evidence="1">Cytoplasm</location>
    </subcellularLocation>
</comment>
<comment type="similarity">
    <text evidence="1">Belongs to the SurE nucleotidase family.</text>
</comment>
<gene>
    <name evidence="1" type="primary">surE</name>
    <name type="ordered locus">Smed_1168</name>
</gene>
<name>SURE_SINMW</name>
<accession>A6U8N9</accession>
<dbReference type="EC" id="3.1.3.5" evidence="1"/>
<dbReference type="EMBL" id="CP000738">
    <property type="protein sequence ID" value="ABR60019.1"/>
    <property type="molecule type" value="Genomic_DNA"/>
</dbReference>
<dbReference type="RefSeq" id="WP_011975338.1">
    <property type="nucleotide sequence ID" value="NC_009636.1"/>
</dbReference>
<dbReference type="RefSeq" id="YP_001326854.1">
    <property type="nucleotide sequence ID" value="NC_009636.1"/>
</dbReference>
<dbReference type="SMR" id="A6U8N9"/>
<dbReference type="STRING" id="366394.Smed_1168"/>
<dbReference type="GeneID" id="61612052"/>
<dbReference type="KEGG" id="smd:Smed_1168"/>
<dbReference type="PATRIC" id="fig|366394.8.peg.4294"/>
<dbReference type="eggNOG" id="COG0496">
    <property type="taxonomic scope" value="Bacteria"/>
</dbReference>
<dbReference type="HOGENOM" id="CLU_045192_1_2_5"/>
<dbReference type="OrthoDB" id="9780815at2"/>
<dbReference type="Proteomes" id="UP000001108">
    <property type="component" value="Chromosome"/>
</dbReference>
<dbReference type="GO" id="GO:0005737">
    <property type="term" value="C:cytoplasm"/>
    <property type="evidence" value="ECO:0007669"/>
    <property type="project" value="UniProtKB-SubCell"/>
</dbReference>
<dbReference type="GO" id="GO:0008254">
    <property type="term" value="F:3'-nucleotidase activity"/>
    <property type="evidence" value="ECO:0007669"/>
    <property type="project" value="TreeGrafter"/>
</dbReference>
<dbReference type="GO" id="GO:0008253">
    <property type="term" value="F:5'-nucleotidase activity"/>
    <property type="evidence" value="ECO:0007669"/>
    <property type="project" value="UniProtKB-UniRule"/>
</dbReference>
<dbReference type="GO" id="GO:0004309">
    <property type="term" value="F:exopolyphosphatase activity"/>
    <property type="evidence" value="ECO:0007669"/>
    <property type="project" value="TreeGrafter"/>
</dbReference>
<dbReference type="GO" id="GO:0046872">
    <property type="term" value="F:metal ion binding"/>
    <property type="evidence" value="ECO:0007669"/>
    <property type="project" value="UniProtKB-UniRule"/>
</dbReference>
<dbReference type="GO" id="GO:0000166">
    <property type="term" value="F:nucleotide binding"/>
    <property type="evidence" value="ECO:0007669"/>
    <property type="project" value="UniProtKB-KW"/>
</dbReference>
<dbReference type="FunFam" id="3.40.1210.10:FF:000001">
    <property type="entry name" value="5'/3'-nucleotidase SurE"/>
    <property type="match status" value="1"/>
</dbReference>
<dbReference type="Gene3D" id="3.40.1210.10">
    <property type="entry name" value="Survival protein SurE-like phosphatase/nucleotidase"/>
    <property type="match status" value="1"/>
</dbReference>
<dbReference type="HAMAP" id="MF_00060">
    <property type="entry name" value="SurE"/>
    <property type="match status" value="1"/>
</dbReference>
<dbReference type="InterPro" id="IPR030048">
    <property type="entry name" value="SurE"/>
</dbReference>
<dbReference type="InterPro" id="IPR002828">
    <property type="entry name" value="SurE-like_Pase/nucleotidase"/>
</dbReference>
<dbReference type="InterPro" id="IPR036523">
    <property type="entry name" value="SurE-like_sf"/>
</dbReference>
<dbReference type="NCBIfam" id="NF001490">
    <property type="entry name" value="PRK00346.1-4"/>
    <property type="match status" value="1"/>
</dbReference>
<dbReference type="NCBIfam" id="TIGR00087">
    <property type="entry name" value="surE"/>
    <property type="match status" value="1"/>
</dbReference>
<dbReference type="PANTHER" id="PTHR30457">
    <property type="entry name" value="5'-NUCLEOTIDASE SURE"/>
    <property type="match status" value="1"/>
</dbReference>
<dbReference type="PANTHER" id="PTHR30457:SF12">
    <property type="entry name" value="5'_3'-NUCLEOTIDASE SURE"/>
    <property type="match status" value="1"/>
</dbReference>
<dbReference type="Pfam" id="PF01975">
    <property type="entry name" value="SurE"/>
    <property type="match status" value="1"/>
</dbReference>
<dbReference type="SUPFAM" id="SSF64167">
    <property type="entry name" value="SurE-like"/>
    <property type="match status" value="1"/>
</dbReference>
<reference key="1">
    <citation type="submission" date="2007-06" db="EMBL/GenBank/DDBJ databases">
        <title>Complete sequence of Sinorhizobium medicae WSM419 chromosome.</title>
        <authorList>
            <consortium name="US DOE Joint Genome Institute"/>
            <person name="Copeland A."/>
            <person name="Lucas S."/>
            <person name="Lapidus A."/>
            <person name="Barry K."/>
            <person name="Glavina del Rio T."/>
            <person name="Dalin E."/>
            <person name="Tice H."/>
            <person name="Pitluck S."/>
            <person name="Chain P."/>
            <person name="Malfatti S."/>
            <person name="Shin M."/>
            <person name="Vergez L."/>
            <person name="Schmutz J."/>
            <person name="Larimer F."/>
            <person name="Land M."/>
            <person name="Hauser L."/>
            <person name="Kyrpides N."/>
            <person name="Mikhailova N."/>
            <person name="Reeve W.G."/>
            <person name="Richardson P."/>
        </authorList>
    </citation>
    <scope>NUCLEOTIDE SEQUENCE [LARGE SCALE GENOMIC DNA]</scope>
    <source>
        <strain>WSM419</strain>
    </source>
</reference>
<organism>
    <name type="scientific">Sinorhizobium medicae (strain WSM419)</name>
    <name type="common">Ensifer medicae</name>
    <dbReference type="NCBI Taxonomy" id="366394"/>
    <lineage>
        <taxon>Bacteria</taxon>
        <taxon>Pseudomonadati</taxon>
        <taxon>Pseudomonadota</taxon>
        <taxon>Alphaproteobacteria</taxon>
        <taxon>Hyphomicrobiales</taxon>
        <taxon>Rhizobiaceae</taxon>
        <taxon>Sinorhizobium/Ensifer group</taxon>
        <taxon>Sinorhizobium</taxon>
    </lineage>
</organism>
<feature type="chain" id="PRO_1000007790" description="5'-nucleotidase SurE">
    <location>
        <begin position="1"/>
        <end position="256"/>
    </location>
</feature>
<feature type="binding site" evidence="1">
    <location>
        <position position="8"/>
    </location>
    <ligand>
        <name>a divalent metal cation</name>
        <dbReference type="ChEBI" id="CHEBI:60240"/>
    </ligand>
</feature>
<feature type="binding site" evidence="1">
    <location>
        <position position="9"/>
    </location>
    <ligand>
        <name>a divalent metal cation</name>
        <dbReference type="ChEBI" id="CHEBI:60240"/>
    </ligand>
</feature>
<feature type="binding site" evidence="1">
    <location>
        <position position="40"/>
    </location>
    <ligand>
        <name>a divalent metal cation</name>
        <dbReference type="ChEBI" id="CHEBI:60240"/>
    </ligand>
</feature>
<feature type="binding site" evidence="1">
    <location>
        <position position="92"/>
    </location>
    <ligand>
        <name>a divalent metal cation</name>
        <dbReference type="ChEBI" id="CHEBI:60240"/>
    </ligand>
</feature>
<protein>
    <recommendedName>
        <fullName evidence="1">5'-nucleotidase SurE</fullName>
        <ecNumber evidence="1">3.1.3.5</ecNumber>
    </recommendedName>
    <alternativeName>
        <fullName evidence="1">Nucleoside 5'-monophosphate phosphohydrolase</fullName>
    </alternativeName>
</protein>
<proteinExistence type="inferred from homology"/>